<protein>
    <recommendedName>
        <fullName evidence="1">Phosphatidylglycerol--prolipoprotein diacylglyceryl transferase</fullName>
        <ecNumber evidence="1">2.5.1.145</ecNumber>
    </recommendedName>
</protein>
<reference key="1">
    <citation type="journal article" date="2003" name="Proc. Natl. Acad. Sci. U.S.A.">
        <title>Reductive genome evolution in Buchnera aphidicola.</title>
        <authorList>
            <person name="van Ham R.C.H.J."/>
            <person name="Kamerbeek J."/>
            <person name="Palacios C."/>
            <person name="Rausell C."/>
            <person name="Abascal F."/>
            <person name="Bastolla U."/>
            <person name="Fernandez J.M."/>
            <person name="Jimenez L."/>
            <person name="Postigo M."/>
            <person name="Silva F.J."/>
            <person name="Tamames J."/>
            <person name="Viguera E."/>
            <person name="Latorre A."/>
            <person name="Valencia A."/>
            <person name="Moran F."/>
            <person name="Moya A."/>
        </authorList>
    </citation>
    <scope>NUCLEOTIDE SEQUENCE [LARGE SCALE GENOMIC DNA]</scope>
    <source>
        <strain>Bp</strain>
    </source>
</reference>
<evidence type="ECO:0000255" key="1">
    <source>
        <dbReference type="HAMAP-Rule" id="MF_01147"/>
    </source>
</evidence>
<evidence type="ECO:0000305" key="2"/>
<gene>
    <name evidence="1" type="primary">lgt</name>
    <name type="ordered locus">bbp_387</name>
</gene>
<proteinExistence type="inferred from homology"/>
<name>LGT_BUCBP</name>
<keyword id="KW-1003">Cell membrane</keyword>
<keyword id="KW-0472">Membrane</keyword>
<keyword id="KW-1185">Reference proteome</keyword>
<keyword id="KW-0808">Transferase</keyword>
<keyword id="KW-0812">Transmembrane</keyword>
<keyword id="KW-1133">Transmembrane helix</keyword>
<dbReference type="EC" id="2.5.1.145" evidence="1"/>
<dbReference type="EMBL" id="AE016826">
    <property type="protein sequence ID" value="AAO27099.1"/>
    <property type="status" value="ALT_INIT"/>
    <property type="molecule type" value="Genomic_DNA"/>
</dbReference>
<dbReference type="RefSeq" id="WP_011091500.1">
    <property type="nucleotide sequence ID" value="NC_004545.1"/>
</dbReference>
<dbReference type="SMR" id="Q89AC7"/>
<dbReference type="STRING" id="224915.bbp_387"/>
<dbReference type="KEGG" id="bab:bbp_387"/>
<dbReference type="eggNOG" id="COG0682">
    <property type="taxonomic scope" value="Bacteria"/>
</dbReference>
<dbReference type="HOGENOM" id="CLU_013386_1_0_6"/>
<dbReference type="OrthoDB" id="871140at2"/>
<dbReference type="UniPathway" id="UPA00664"/>
<dbReference type="Proteomes" id="UP000000601">
    <property type="component" value="Chromosome"/>
</dbReference>
<dbReference type="GO" id="GO:0005886">
    <property type="term" value="C:plasma membrane"/>
    <property type="evidence" value="ECO:0007669"/>
    <property type="project" value="UniProtKB-SubCell"/>
</dbReference>
<dbReference type="GO" id="GO:0008961">
    <property type="term" value="F:phosphatidylglycerol-prolipoprotein diacylglyceryl transferase activity"/>
    <property type="evidence" value="ECO:0007669"/>
    <property type="project" value="UniProtKB-UniRule"/>
</dbReference>
<dbReference type="GO" id="GO:0042158">
    <property type="term" value="P:lipoprotein biosynthetic process"/>
    <property type="evidence" value="ECO:0007669"/>
    <property type="project" value="UniProtKB-UniRule"/>
</dbReference>
<dbReference type="HAMAP" id="MF_01147">
    <property type="entry name" value="Lgt"/>
    <property type="match status" value="1"/>
</dbReference>
<dbReference type="InterPro" id="IPR001640">
    <property type="entry name" value="Lgt"/>
</dbReference>
<dbReference type="NCBIfam" id="TIGR00544">
    <property type="entry name" value="lgt"/>
    <property type="match status" value="1"/>
</dbReference>
<dbReference type="PANTHER" id="PTHR30589:SF0">
    <property type="entry name" value="PHOSPHATIDYLGLYCEROL--PROLIPOPROTEIN DIACYLGLYCERYL TRANSFERASE"/>
    <property type="match status" value="1"/>
</dbReference>
<dbReference type="PANTHER" id="PTHR30589">
    <property type="entry name" value="PROLIPOPROTEIN DIACYLGLYCERYL TRANSFERASE"/>
    <property type="match status" value="1"/>
</dbReference>
<dbReference type="Pfam" id="PF01790">
    <property type="entry name" value="LGT"/>
    <property type="match status" value="1"/>
</dbReference>
<dbReference type="PROSITE" id="PS01311">
    <property type="entry name" value="LGT"/>
    <property type="match status" value="1"/>
</dbReference>
<feature type="chain" id="PRO_0000172572" description="Phosphatidylglycerol--prolipoprotein diacylglyceryl transferase">
    <location>
        <begin position="1"/>
        <end position="280"/>
    </location>
</feature>
<feature type="transmembrane region" description="Helical" evidence="1">
    <location>
        <begin position="15"/>
        <end position="35"/>
    </location>
</feature>
<feature type="transmembrane region" description="Helical" evidence="1">
    <location>
        <begin position="60"/>
        <end position="80"/>
    </location>
</feature>
<feature type="transmembrane region" description="Helical" evidence="1">
    <location>
        <begin position="90"/>
        <end position="110"/>
    </location>
</feature>
<feature type="transmembrane region" description="Helical" evidence="1">
    <location>
        <begin position="217"/>
        <end position="237"/>
    </location>
</feature>
<feature type="transmembrane region" description="Helical" evidence="1">
    <location>
        <begin position="257"/>
        <end position="277"/>
    </location>
</feature>
<feature type="binding site" evidence="1">
    <location>
        <position position="138"/>
    </location>
    <ligand>
        <name>a 1,2-diacyl-sn-glycero-3-phospho-(1'-sn-glycerol)</name>
        <dbReference type="ChEBI" id="CHEBI:64716"/>
    </ligand>
</feature>
<organism>
    <name type="scientific">Buchnera aphidicola subsp. Baizongia pistaciae (strain Bp)</name>
    <dbReference type="NCBI Taxonomy" id="224915"/>
    <lineage>
        <taxon>Bacteria</taxon>
        <taxon>Pseudomonadati</taxon>
        <taxon>Pseudomonadota</taxon>
        <taxon>Gammaproteobacteria</taxon>
        <taxon>Enterobacterales</taxon>
        <taxon>Erwiniaceae</taxon>
        <taxon>Buchnera</taxon>
    </lineage>
</organism>
<comment type="function">
    <text evidence="1">Catalyzes the transfer of the diacylglyceryl group from phosphatidylglycerol to the sulfhydryl group of the N-terminal cysteine of a prolipoprotein, the first step in the formation of mature lipoproteins.</text>
</comment>
<comment type="catalytic activity">
    <reaction evidence="1">
        <text>L-cysteinyl-[prolipoprotein] + a 1,2-diacyl-sn-glycero-3-phospho-(1'-sn-glycerol) = an S-1,2-diacyl-sn-glyceryl-L-cysteinyl-[prolipoprotein] + sn-glycerol 1-phosphate + H(+)</text>
        <dbReference type="Rhea" id="RHEA:56712"/>
        <dbReference type="Rhea" id="RHEA-COMP:14679"/>
        <dbReference type="Rhea" id="RHEA-COMP:14680"/>
        <dbReference type="ChEBI" id="CHEBI:15378"/>
        <dbReference type="ChEBI" id="CHEBI:29950"/>
        <dbReference type="ChEBI" id="CHEBI:57685"/>
        <dbReference type="ChEBI" id="CHEBI:64716"/>
        <dbReference type="ChEBI" id="CHEBI:140658"/>
        <dbReference type="EC" id="2.5.1.145"/>
    </reaction>
</comment>
<comment type="pathway">
    <text evidence="1">Protein modification; lipoprotein biosynthesis (diacylglyceryl transfer).</text>
</comment>
<comment type="subcellular location">
    <subcellularLocation>
        <location evidence="1">Cell membrane</location>
        <topology evidence="1">Multi-pass membrane protein</topology>
    </subcellularLocation>
</comment>
<comment type="similarity">
    <text evidence="1 2">Belongs to the Lgt family.</text>
</comment>
<comment type="sequence caution" evidence="2">
    <conflict type="erroneous initiation">
        <sequence resource="EMBL-CDS" id="AAO27099"/>
    </conflict>
</comment>
<sequence length="280" mass="32365">MYIHFPQFSPIIFSIFSIPIRWYGLMYFLAFIFALWRGKTRAEYYNLTQIEVENLLYSCFIGLFIGGRIGYIIFYNPVFFFENMSHILKIWEGGMSFHGGLLGVIIVLLFFSKKLNKHILEISDFIVPLVPFGLGAGRLGNFINGELWGRIAPDFKFSVLFPNSREIDLNVAANNLELKSLIEKFGVLPRHPSQIYEFVLEGLVLFFVLNYFSKKSMPFGFVSSIFLILYGCFRIFLEIFRQPDRQIGLFLNTFSMGQLLSMPMIVLGILIAINIYVKVL</sequence>
<accession>Q89AC7</accession>